<sequence>MGKTNDWLDFDQLAEEKVRDALKPPSMYKVILVNDDYTPMEFVIDVLQKFFSYDVERATQLMLAVHYQGKAICGVFTAEVAETKVAMVNKYARENEHPLLCTLEKA</sequence>
<accession>Q3Z3N8</accession>
<feature type="chain" id="PRO_0000300728" description="ATP-dependent Clp protease adapter protein ClpS">
    <location>
        <begin position="1"/>
        <end position="106"/>
    </location>
</feature>
<evidence type="ECO:0000255" key="1">
    <source>
        <dbReference type="HAMAP-Rule" id="MF_00302"/>
    </source>
</evidence>
<name>CLPS_SHISS</name>
<comment type="function">
    <text evidence="1">Involved in the modulation of the specificity of the ClpAP-mediated ATP-dependent protein degradation.</text>
</comment>
<comment type="subunit">
    <text evidence="1">Binds to the N-terminal domain of the chaperone ClpA.</text>
</comment>
<comment type="similarity">
    <text evidence="1">Belongs to the ClpS family.</text>
</comment>
<dbReference type="EMBL" id="CP000038">
    <property type="protein sequence ID" value="AAZ87624.1"/>
    <property type="molecule type" value="Genomic_DNA"/>
</dbReference>
<dbReference type="RefSeq" id="WP_000520781.1">
    <property type="nucleotide sequence ID" value="NC_007384.1"/>
</dbReference>
<dbReference type="SMR" id="Q3Z3N8"/>
<dbReference type="GeneID" id="86863397"/>
<dbReference type="KEGG" id="ssn:SSON_0882"/>
<dbReference type="HOGENOM" id="CLU_134358_2_1_6"/>
<dbReference type="Proteomes" id="UP000002529">
    <property type="component" value="Chromosome"/>
</dbReference>
<dbReference type="GO" id="GO:0030163">
    <property type="term" value="P:protein catabolic process"/>
    <property type="evidence" value="ECO:0007669"/>
    <property type="project" value="InterPro"/>
</dbReference>
<dbReference type="GO" id="GO:0006508">
    <property type="term" value="P:proteolysis"/>
    <property type="evidence" value="ECO:0007669"/>
    <property type="project" value="UniProtKB-UniRule"/>
</dbReference>
<dbReference type="FunFam" id="3.30.1390.10:FF:000002">
    <property type="entry name" value="ATP-dependent Clp protease adapter protein ClpS"/>
    <property type="match status" value="1"/>
</dbReference>
<dbReference type="Gene3D" id="3.30.1390.10">
    <property type="match status" value="1"/>
</dbReference>
<dbReference type="HAMAP" id="MF_00302">
    <property type="entry name" value="ClpS"/>
    <property type="match status" value="1"/>
</dbReference>
<dbReference type="InterPro" id="IPR022935">
    <property type="entry name" value="ClpS"/>
</dbReference>
<dbReference type="InterPro" id="IPR003769">
    <property type="entry name" value="ClpS_core"/>
</dbReference>
<dbReference type="InterPro" id="IPR014719">
    <property type="entry name" value="Ribosomal_bL12_C/ClpS-like"/>
</dbReference>
<dbReference type="NCBIfam" id="NF000670">
    <property type="entry name" value="PRK00033.1-3"/>
    <property type="match status" value="1"/>
</dbReference>
<dbReference type="NCBIfam" id="NF000672">
    <property type="entry name" value="PRK00033.1-5"/>
    <property type="match status" value="1"/>
</dbReference>
<dbReference type="PANTHER" id="PTHR33473:SF19">
    <property type="entry name" value="ATP-DEPENDENT CLP PROTEASE ADAPTER PROTEIN CLPS"/>
    <property type="match status" value="1"/>
</dbReference>
<dbReference type="PANTHER" id="PTHR33473">
    <property type="entry name" value="ATP-DEPENDENT CLP PROTEASE ADAPTER PROTEIN CLPS1, CHLOROPLASTIC"/>
    <property type="match status" value="1"/>
</dbReference>
<dbReference type="Pfam" id="PF02617">
    <property type="entry name" value="ClpS"/>
    <property type="match status" value="1"/>
</dbReference>
<dbReference type="SUPFAM" id="SSF54736">
    <property type="entry name" value="ClpS-like"/>
    <property type="match status" value="1"/>
</dbReference>
<keyword id="KW-1185">Reference proteome</keyword>
<reference key="1">
    <citation type="journal article" date="2005" name="Nucleic Acids Res.">
        <title>Genome dynamics and diversity of Shigella species, the etiologic agents of bacillary dysentery.</title>
        <authorList>
            <person name="Yang F."/>
            <person name="Yang J."/>
            <person name="Zhang X."/>
            <person name="Chen L."/>
            <person name="Jiang Y."/>
            <person name="Yan Y."/>
            <person name="Tang X."/>
            <person name="Wang J."/>
            <person name="Xiong Z."/>
            <person name="Dong J."/>
            <person name="Xue Y."/>
            <person name="Zhu Y."/>
            <person name="Xu X."/>
            <person name="Sun L."/>
            <person name="Chen S."/>
            <person name="Nie H."/>
            <person name="Peng J."/>
            <person name="Xu J."/>
            <person name="Wang Y."/>
            <person name="Yuan Z."/>
            <person name="Wen Y."/>
            <person name="Yao Z."/>
            <person name="Shen Y."/>
            <person name="Qiang B."/>
            <person name="Hou Y."/>
            <person name="Yu J."/>
            <person name="Jin Q."/>
        </authorList>
    </citation>
    <scope>NUCLEOTIDE SEQUENCE [LARGE SCALE GENOMIC DNA]</scope>
    <source>
        <strain>Ss046</strain>
    </source>
</reference>
<gene>
    <name evidence="1" type="primary">clpS</name>
    <name type="ordered locus">SSON_0882</name>
</gene>
<protein>
    <recommendedName>
        <fullName evidence="1">ATP-dependent Clp protease adapter protein ClpS</fullName>
    </recommendedName>
</protein>
<proteinExistence type="inferred from homology"/>
<organism>
    <name type="scientific">Shigella sonnei (strain Ss046)</name>
    <dbReference type="NCBI Taxonomy" id="300269"/>
    <lineage>
        <taxon>Bacteria</taxon>
        <taxon>Pseudomonadati</taxon>
        <taxon>Pseudomonadota</taxon>
        <taxon>Gammaproteobacteria</taxon>
        <taxon>Enterobacterales</taxon>
        <taxon>Enterobacteriaceae</taxon>
        <taxon>Shigella</taxon>
    </lineage>
</organism>